<evidence type="ECO:0000250" key="1"/>
<evidence type="ECO:0000255" key="2"/>
<evidence type="ECO:0000305" key="3"/>
<evidence type="ECO:0007829" key="4">
    <source>
        <dbReference type="PDB" id="8HCR"/>
    </source>
</evidence>
<protein>
    <recommendedName>
        <fullName>Probable cytochrome c oxidase polypeptide 4</fullName>
        <ecNumber>7.1.1.9</ecNumber>
    </recommendedName>
    <alternativeName>
        <fullName>Cytochrome aa3 subunit 4</fullName>
    </alternativeName>
    <alternativeName>
        <fullName>Cytochrome c oxidase polypeptide IV</fullName>
    </alternativeName>
</protein>
<sequence>MHIEARLFEFVAAFFVVTAVLYGVLTSMFATGGVEWAGTTALALTGGMALIVATFFRFVARRLDSRPEDYEGAEISDGAGELGFFSPHSWWPIMVALSGSVAAVGIALWLPWLIAAGVAFILASAAGLVFEYYVGPEKH</sequence>
<organism>
    <name type="scientific">Mycobacterium tuberculosis (strain ATCC 25618 / H37Rv)</name>
    <dbReference type="NCBI Taxonomy" id="83332"/>
    <lineage>
        <taxon>Bacteria</taxon>
        <taxon>Bacillati</taxon>
        <taxon>Actinomycetota</taxon>
        <taxon>Actinomycetes</taxon>
        <taxon>Mycobacteriales</taxon>
        <taxon>Mycobacteriaceae</taxon>
        <taxon>Mycobacterium</taxon>
        <taxon>Mycobacterium tuberculosis complex</taxon>
    </lineage>
</organism>
<reference key="1">
    <citation type="journal article" date="1998" name="Nature">
        <title>Deciphering the biology of Mycobacterium tuberculosis from the complete genome sequence.</title>
        <authorList>
            <person name="Cole S.T."/>
            <person name="Brosch R."/>
            <person name="Parkhill J."/>
            <person name="Garnier T."/>
            <person name="Churcher C.M."/>
            <person name="Harris D.E."/>
            <person name="Gordon S.V."/>
            <person name="Eiglmeier K."/>
            <person name="Gas S."/>
            <person name="Barry C.E. III"/>
            <person name="Tekaia F."/>
            <person name="Badcock K."/>
            <person name="Basham D."/>
            <person name="Brown D."/>
            <person name="Chillingworth T."/>
            <person name="Connor R."/>
            <person name="Davies R.M."/>
            <person name="Devlin K."/>
            <person name="Feltwell T."/>
            <person name="Gentles S."/>
            <person name="Hamlin N."/>
            <person name="Holroyd S."/>
            <person name="Hornsby T."/>
            <person name="Jagels K."/>
            <person name="Krogh A."/>
            <person name="McLean J."/>
            <person name="Moule S."/>
            <person name="Murphy L.D."/>
            <person name="Oliver S."/>
            <person name="Osborne J."/>
            <person name="Quail M.A."/>
            <person name="Rajandream M.A."/>
            <person name="Rogers J."/>
            <person name="Rutter S."/>
            <person name="Seeger K."/>
            <person name="Skelton S."/>
            <person name="Squares S."/>
            <person name="Squares R."/>
            <person name="Sulston J.E."/>
            <person name="Taylor K."/>
            <person name="Whitehead S."/>
            <person name="Barrell B.G."/>
        </authorList>
    </citation>
    <scope>NUCLEOTIDE SEQUENCE [LARGE SCALE GENOMIC DNA]</scope>
    <source>
        <strain>ATCC 25618 / H37Rv</strain>
    </source>
</reference>
<accession>P9WP45</accession>
<accession>L0TBS9</accession>
<accession>P64947</accession>
<accession>Q10406</accession>
<proteinExistence type="evidence at protein level"/>
<name>COX4_MYCTU</name>
<feature type="chain" id="PRO_0000220019" description="Probable cytochrome c oxidase polypeptide 4">
    <location>
        <begin position="1"/>
        <end position="139"/>
    </location>
</feature>
<feature type="transmembrane region" description="Helical" evidence="2">
    <location>
        <begin position="10"/>
        <end position="30"/>
    </location>
</feature>
<feature type="transmembrane region" description="Helical" evidence="2">
    <location>
        <begin position="36"/>
        <end position="56"/>
    </location>
</feature>
<feature type="transmembrane region" description="Helical" evidence="2">
    <location>
        <begin position="78"/>
        <end position="98"/>
    </location>
</feature>
<feature type="transmembrane region" description="Helical" evidence="2">
    <location>
        <begin position="101"/>
        <end position="121"/>
    </location>
</feature>
<feature type="helix" evidence="4">
    <location>
        <begin position="3"/>
        <end position="27"/>
    </location>
</feature>
<feature type="strand" evidence="4">
    <location>
        <begin position="31"/>
        <end position="33"/>
    </location>
</feature>
<feature type="helix" evidence="4">
    <location>
        <begin position="38"/>
        <end position="61"/>
    </location>
</feature>
<feature type="turn" evidence="4">
    <location>
        <begin position="67"/>
        <end position="69"/>
    </location>
</feature>
<feature type="turn" evidence="4">
    <location>
        <begin position="75"/>
        <end position="78"/>
    </location>
</feature>
<feature type="strand" evidence="4">
    <location>
        <begin position="80"/>
        <end position="84"/>
    </location>
</feature>
<feature type="helix" evidence="4">
    <location>
        <begin position="91"/>
        <end position="107"/>
    </location>
</feature>
<feature type="helix" evidence="4">
    <location>
        <begin position="111"/>
        <end position="129"/>
    </location>
</feature>
<feature type="helix" evidence="4">
    <location>
        <begin position="130"/>
        <end position="132"/>
    </location>
</feature>
<keyword id="KW-0002">3D-structure</keyword>
<keyword id="KW-1003">Cell membrane</keyword>
<keyword id="KW-0472">Membrane</keyword>
<keyword id="KW-1185">Reference proteome</keyword>
<keyword id="KW-1278">Translocase</keyword>
<keyword id="KW-0812">Transmembrane</keyword>
<keyword id="KW-1133">Transmembrane helix</keyword>
<gene>
    <name type="primary">ctaF</name>
    <name type="ordered locus">Rv2199c</name>
    <name type="ORF">MTCY190.10c</name>
</gene>
<dbReference type="EC" id="7.1.1.9"/>
<dbReference type="EMBL" id="AL123456">
    <property type="protein sequence ID" value="CCP44976.1"/>
    <property type="molecule type" value="Genomic_DNA"/>
</dbReference>
<dbReference type="PIR" id="H70784">
    <property type="entry name" value="H70784"/>
</dbReference>
<dbReference type="RefSeq" id="NP_216715.1">
    <property type="nucleotide sequence ID" value="NC_000962.3"/>
</dbReference>
<dbReference type="RefSeq" id="WP_003411408.1">
    <property type="nucleotide sequence ID" value="NZ_NVQJ01000008.1"/>
</dbReference>
<dbReference type="PDB" id="8HCR">
    <property type="method" value="EM"/>
    <property type="chains" value="H/T=1-139"/>
</dbReference>
<dbReference type="PDBsum" id="8HCR"/>
<dbReference type="SMR" id="P9WP45"/>
<dbReference type="STRING" id="83332.Rv2199c"/>
<dbReference type="PaxDb" id="83332-Rv2199c"/>
<dbReference type="DNASU" id="888692"/>
<dbReference type="GeneID" id="888692"/>
<dbReference type="KEGG" id="mtu:Rv2199c"/>
<dbReference type="KEGG" id="mtv:RVBD_2199c"/>
<dbReference type="TubercuList" id="Rv2199c"/>
<dbReference type="eggNOG" id="ENOG5032TTI">
    <property type="taxonomic scope" value="Bacteria"/>
</dbReference>
<dbReference type="InParanoid" id="P9WP45"/>
<dbReference type="OrthoDB" id="5244617at2"/>
<dbReference type="PhylomeDB" id="P9WP45"/>
<dbReference type="Proteomes" id="UP000001584">
    <property type="component" value="Chromosome"/>
</dbReference>
<dbReference type="GO" id="GO:0005886">
    <property type="term" value="C:plasma membrane"/>
    <property type="evidence" value="ECO:0007669"/>
    <property type="project" value="UniProtKB-SubCell"/>
</dbReference>
<dbReference type="GO" id="GO:0004129">
    <property type="term" value="F:cytochrome-c oxidase activity"/>
    <property type="evidence" value="ECO:0007669"/>
    <property type="project" value="UniProtKB-EC"/>
</dbReference>
<dbReference type="GO" id="GO:0022900">
    <property type="term" value="P:electron transport chain"/>
    <property type="evidence" value="ECO:0007669"/>
    <property type="project" value="InterPro"/>
</dbReference>
<dbReference type="InterPro" id="IPR021050">
    <property type="entry name" value="Cyt_c_oxidase_su4_actinobac"/>
</dbReference>
<dbReference type="Pfam" id="PF12270">
    <property type="entry name" value="Cyt_c_ox_IV"/>
    <property type="match status" value="1"/>
</dbReference>
<dbReference type="PIRSF" id="PIRSF017385">
    <property type="entry name" value="CtaF"/>
    <property type="match status" value="1"/>
</dbReference>
<comment type="function">
    <text evidence="1">Part of cytochrome c oxidase, its function is unknown.</text>
</comment>
<comment type="catalytic activity">
    <reaction>
        <text>4 Fe(II)-[cytochrome c] + O2 + 8 H(+)(in) = 4 Fe(III)-[cytochrome c] + 2 H2O + 4 H(+)(out)</text>
        <dbReference type="Rhea" id="RHEA:11436"/>
        <dbReference type="Rhea" id="RHEA-COMP:10350"/>
        <dbReference type="Rhea" id="RHEA-COMP:14399"/>
        <dbReference type="ChEBI" id="CHEBI:15377"/>
        <dbReference type="ChEBI" id="CHEBI:15378"/>
        <dbReference type="ChEBI" id="CHEBI:15379"/>
        <dbReference type="ChEBI" id="CHEBI:29033"/>
        <dbReference type="ChEBI" id="CHEBI:29034"/>
        <dbReference type="EC" id="7.1.1.9"/>
    </reaction>
</comment>
<comment type="subunit">
    <text evidence="1">Associates with subunits I, II and III to form cytochrome c oxidase.</text>
</comment>
<comment type="subcellular location">
    <subcellularLocation>
        <location evidence="1">Cell membrane</location>
        <topology evidence="1">Multi-pass membrane protein</topology>
    </subcellularLocation>
</comment>
<comment type="similarity">
    <text evidence="3">Belongs to the cytochrome c oxidase bacterial subunit CtaF family.</text>
</comment>